<evidence type="ECO:0000250" key="1">
    <source>
        <dbReference type="UniProtKB" id="O00142"/>
    </source>
</evidence>
<evidence type="ECO:0000250" key="2">
    <source>
        <dbReference type="UniProtKB" id="O57203"/>
    </source>
</evidence>
<evidence type="ECO:0000250" key="3">
    <source>
        <dbReference type="UniProtKB" id="Q9R088"/>
    </source>
</evidence>
<evidence type="ECO:0000255" key="4"/>
<evidence type="ECO:0000256" key="5">
    <source>
        <dbReference type="SAM" id="MobiDB-lite"/>
    </source>
</evidence>
<evidence type="ECO:0000305" key="6"/>
<reference key="1">
    <citation type="submission" date="2000-07" db="EMBL/GenBank/DDBJ databases">
        <title>Isolation of full-length cDNA clones from macaque brain cDNA libraries.</title>
        <authorList>
            <person name="Osada N."/>
            <person name="Hida M."/>
            <person name="Kusuda J."/>
            <person name="Tanuma R."/>
            <person name="Iseki K."/>
            <person name="Hirai M."/>
            <person name="Terao K."/>
            <person name="Suzuki Y."/>
            <person name="Sugano S."/>
            <person name="Hashimoto K."/>
        </authorList>
    </citation>
    <scope>NUCLEOTIDE SEQUENCE [LARGE SCALE MRNA]</scope>
    <source>
        <tissue>Brain cortex</tissue>
    </source>
</reference>
<comment type="function">
    <text evidence="1 3">Phosphorylates thymidine, deoxycytidine, and deoxyuridine in the mitochondrial matrix (By similarity). In non-replicating cells, where cytosolic dNTP synthesis is down-regulated, mtDNA synthesis depends solely on TK2 and DGUOK (By similarity).</text>
</comment>
<comment type="catalytic activity">
    <reaction evidence="3">
        <text>thymidine + ATP = dTMP + ADP + H(+)</text>
        <dbReference type="Rhea" id="RHEA:19129"/>
        <dbReference type="ChEBI" id="CHEBI:15378"/>
        <dbReference type="ChEBI" id="CHEBI:17748"/>
        <dbReference type="ChEBI" id="CHEBI:30616"/>
        <dbReference type="ChEBI" id="CHEBI:63528"/>
        <dbReference type="ChEBI" id="CHEBI:456216"/>
        <dbReference type="EC" id="2.7.1.21"/>
    </reaction>
    <physiologicalReaction direction="left-to-right" evidence="3">
        <dbReference type="Rhea" id="RHEA:19130"/>
    </physiologicalReaction>
</comment>
<comment type="catalytic activity">
    <reaction evidence="3">
        <text>2'-deoxycytidine + ATP = dCMP + ADP + H(+)</text>
        <dbReference type="Rhea" id="RHEA:46040"/>
        <dbReference type="ChEBI" id="CHEBI:15378"/>
        <dbReference type="ChEBI" id="CHEBI:15698"/>
        <dbReference type="ChEBI" id="CHEBI:30616"/>
        <dbReference type="ChEBI" id="CHEBI:57566"/>
        <dbReference type="ChEBI" id="CHEBI:456216"/>
        <dbReference type="EC" id="2.7.1.74"/>
    </reaction>
    <physiologicalReaction direction="left-to-right" evidence="3">
        <dbReference type="Rhea" id="RHEA:46041"/>
    </physiologicalReaction>
</comment>
<comment type="catalytic activity">
    <reaction evidence="3">
        <text>2'-deoxyuridine + ATP = dUMP + ADP + H(+)</text>
        <dbReference type="Rhea" id="RHEA:28206"/>
        <dbReference type="ChEBI" id="CHEBI:15378"/>
        <dbReference type="ChEBI" id="CHEBI:16450"/>
        <dbReference type="ChEBI" id="CHEBI:30616"/>
        <dbReference type="ChEBI" id="CHEBI:246422"/>
        <dbReference type="ChEBI" id="CHEBI:456216"/>
    </reaction>
    <physiologicalReaction direction="left-to-right" evidence="3">
        <dbReference type="Rhea" id="RHEA:28207"/>
    </physiologicalReaction>
</comment>
<comment type="subunit">
    <text evidence="3">Homodimer.</text>
</comment>
<comment type="subcellular location">
    <subcellularLocation>
        <location evidence="3">Mitochondrion</location>
    </subcellularLocation>
</comment>
<comment type="similarity">
    <text evidence="6">Belongs to the DCK/DGK family.</text>
</comment>
<accession>Q9N0C5</accession>
<sequence length="265" mass="30744">MLLRPLRGWAALALRCFEPGSPGSPASGPGSRRVQRGAWPSDKEREKEKKSVICVEGNIASGKTTCLEFFSNATDIEVLTEPVSKWRNVRGHNPLGLMYQDASRWGLTLQTYVQLTMLDRHTCPQVSSVRLMERSIHSARYIFVENLYRSGKMPEVDYVVLSEWFDWILRNMDVSIDLIVYLRTNPETCYQRLKRRCREEEKVIPLEYLEAIHHLHEEWLIKGSLFPVAAPVLVIEADHHMERMLQLFEQNRDRILTPENRKLGP</sequence>
<protein>
    <recommendedName>
        <fullName evidence="6">Thymidine kinase 2, mitochondrial</fullName>
        <ecNumber evidence="3">2.7.1.21</ecNumber>
    </recommendedName>
    <alternativeName>
        <fullName evidence="6">2'-deoxyuridine kinase TK2</fullName>
        <ecNumber evidence="3">2.7.1.74</ecNumber>
    </alternativeName>
    <alternativeName>
        <fullName evidence="6">Deoxycytidine kinase TK2</fullName>
        <ecNumber evidence="3">2.7.1.-</ecNumber>
    </alternativeName>
</protein>
<keyword id="KW-0067">ATP-binding</keyword>
<keyword id="KW-0237">DNA synthesis</keyword>
<keyword id="KW-0418">Kinase</keyword>
<keyword id="KW-0496">Mitochondrion</keyword>
<keyword id="KW-0547">Nucleotide-binding</keyword>
<keyword id="KW-1185">Reference proteome</keyword>
<keyword id="KW-0808">Transferase</keyword>
<keyword id="KW-0809">Transit peptide</keyword>
<dbReference type="EC" id="2.7.1.21" evidence="3"/>
<dbReference type="EC" id="2.7.1.74" evidence="3"/>
<dbReference type="EC" id="2.7.1.-" evidence="3"/>
<dbReference type="EMBL" id="AB046005">
    <property type="protein sequence ID" value="BAB01587.1"/>
    <property type="molecule type" value="mRNA"/>
</dbReference>
<dbReference type="RefSeq" id="NP_001272031.1">
    <property type="nucleotide sequence ID" value="NM_001285102.1"/>
</dbReference>
<dbReference type="SMR" id="Q9N0C5"/>
<dbReference type="STRING" id="9541.ENSMFAP00000031231"/>
<dbReference type="eggNOG" id="KOG4235">
    <property type="taxonomic scope" value="Eukaryota"/>
</dbReference>
<dbReference type="Proteomes" id="UP000233100">
    <property type="component" value="Unplaced"/>
</dbReference>
<dbReference type="GO" id="GO:0005739">
    <property type="term" value="C:mitochondrion"/>
    <property type="evidence" value="ECO:0007669"/>
    <property type="project" value="UniProtKB-SubCell"/>
</dbReference>
<dbReference type="GO" id="GO:0005524">
    <property type="term" value="F:ATP binding"/>
    <property type="evidence" value="ECO:0007669"/>
    <property type="project" value="UniProtKB-KW"/>
</dbReference>
<dbReference type="GO" id="GO:0004797">
    <property type="term" value="F:thymidine kinase activity"/>
    <property type="evidence" value="ECO:0007669"/>
    <property type="project" value="UniProtKB-EC"/>
</dbReference>
<dbReference type="GO" id="GO:1901135">
    <property type="term" value="P:carbohydrate derivative metabolic process"/>
    <property type="evidence" value="ECO:0007669"/>
    <property type="project" value="UniProtKB-ARBA"/>
</dbReference>
<dbReference type="GO" id="GO:0071897">
    <property type="term" value="P:DNA biosynthetic process"/>
    <property type="evidence" value="ECO:0007669"/>
    <property type="project" value="UniProtKB-KW"/>
</dbReference>
<dbReference type="CDD" id="cd01673">
    <property type="entry name" value="dNK"/>
    <property type="match status" value="1"/>
</dbReference>
<dbReference type="FunFam" id="3.40.50.300:FF:000998">
    <property type="entry name" value="Thymidine kinase 2, mitochondrial"/>
    <property type="match status" value="1"/>
</dbReference>
<dbReference type="Gene3D" id="3.40.50.300">
    <property type="entry name" value="P-loop containing nucleotide triphosphate hydrolases"/>
    <property type="match status" value="1"/>
</dbReference>
<dbReference type="InterPro" id="IPR002624">
    <property type="entry name" value="DCK/DGK"/>
</dbReference>
<dbReference type="InterPro" id="IPR050566">
    <property type="entry name" value="Deoxyribonucleoside_kinase"/>
</dbReference>
<dbReference type="InterPro" id="IPR031314">
    <property type="entry name" value="DNK_dom"/>
</dbReference>
<dbReference type="InterPro" id="IPR027417">
    <property type="entry name" value="P-loop_NTPase"/>
</dbReference>
<dbReference type="PANTHER" id="PTHR10513">
    <property type="entry name" value="DEOXYNUCLEOSIDE KINASE"/>
    <property type="match status" value="1"/>
</dbReference>
<dbReference type="PANTHER" id="PTHR10513:SF24">
    <property type="entry name" value="THYMIDINE KINASE 2, MITOCHONDRIAL"/>
    <property type="match status" value="1"/>
</dbReference>
<dbReference type="Pfam" id="PF01712">
    <property type="entry name" value="dNK"/>
    <property type="match status" value="1"/>
</dbReference>
<dbReference type="PIRSF" id="PIRSF000705">
    <property type="entry name" value="DNK"/>
    <property type="match status" value="1"/>
</dbReference>
<dbReference type="SUPFAM" id="SSF52540">
    <property type="entry name" value="P-loop containing nucleoside triphosphate hydrolases"/>
    <property type="match status" value="1"/>
</dbReference>
<proteinExistence type="evidence at transcript level"/>
<feature type="transit peptide" description="Mitochondrion" evidence="4">
    <location>
        <begin position="1"/>
        <end position="33"/>
    </location>
</feature>
<feature type="chain" id="PRO_0000016843" description="Thymidine kinase 2, mitochondrial">
    <location>
        <begin position="34"/>
        <end position="265"/>
    </location>
</feature>
<feature type="region of interest" description="Disordered" evidence="5">
    <location>
        <begin position="21"/>
        <end position="45"/>
    </location>
</feature>
<feature type="compositionally biased region" description="Low complexity" evidence="5">
    <location>
        <begin position="21"/>
        <end position="31"/>
    </location>
</feature>
<feature type="active site" description="Proton acceptor" evidence="2">
    <location>
        <position position="133"/>
    </location>
</feature>
<feature type="binding site" evidence="2">
    <location>
        <begin position="57"/>
        <end position="65"/>
    </location>
    <ligand>
        <name>ATP</name>
        <dbReference type="ChEBI" id="CHEBI:30616"/>
    </ligand>
</feature>
<name>KITM_MACFA</name>
<organism>
    <name type="scientific">Macaca fascicularis</name>
    <name type="common">Crab-eating macaque</name>
    <name type="synonym">Cynomolgus monkey</name>
    <dbReference type="NCBI Taxonomy" id="9541"/>
    <lineage>
        <taxon>Eukaryota</taxon>
        <taxon>Metazoa</taxon>
        <taxon>Chordata</taxon>
        <taxon>Craniata</taxon>
        <taxon>Vertebrata</taxon>
        <taxon>Euteleostomi</taxon>
        <taxon>Mammalia</taxon>
        <taxon>Eutheria</taxon>
        <taxon>Euarchontoglires</taxon>
        <taxon>Primates</taxon>
        <taxon>Haplorrhini</taxon>
        <taxon>Catarrhini</taxon>
        <taxon>Cercopithecidae</taxon>
        <taxon>Cercopithecinae</taxon>
        <taxon>Macaca</taxon>
    </lineage>
</organism>
<gene>
    <name type="primary">TK2</name>
    <name type="ORF">QccE-13136</name>
</gene>